<proteinExistence type="inferred from homology"/>
<feature type="chain" id="PRO_1000063424" description="Phosphoribosyl-AMP cyclohydrolase">
    <location>
        <begin position="1"/>
        <end position="134"/>
    </location>
</feature>
<feature type="binding site" evidence="1">
    <location>
        <position position="77"/>
    </location>
    <ligand>
        <name>Mg(2+)</name>
        <dbReference type="ChEBI" id="CHEBI:18420"/>
    </ligand>
</feature>
<feature type="binding site" evidence="1">
    <location>
        <position position="78"/>
    </location>
    <ligand>
        <name>Zn(2+)</name>
        <dbReference type="ChEBI" id="CHEBI:29105"/>
        <note>ligand shared between dimeric partners</note>
    </ligand>
</feature>
<feature type="binding site" evidence="1">
    <location>
        <position position="79"/>
    </location>
    <ligand>
        <name>Mg(2+)</name>
        <dbReference type="ChEBI" id="CHEBI:18420"/>
    </ligand>
</feature>
<feature type="binding site" evidence="1">
    <location>
        <position position="81"/>
    </location>
    <ligand>
        <name>Mg(2+)</name>
        <dbReference type="ChEBI" id="CHEBI:18420"/>
    </ligand>
</feature>
<feature type="binding site" evidence="1">
    <location>
        <position position="95"/>
    </location>
    <ligand>
        <name>Zn(2+)</name>
        <dbReference type="ChEBI" id="CHEBI:29105"/>
        <note>ligand shared between dimeric partners</note>
    </ligand>
</feature>
<feature type="binding site" evidence="1">
    <location>
        <position position="102"/>
    </location>
    <ligand>
        <name>Zn(2+)</name>
        <dbReference type="ChEBI" id="CHEBI:29105"/>
        <note>ligand shared between dimeric partners</note>
    </ligand>
</feature>
<dbReference type="EC" id="3.5.4.19" evidence="1"/>
<dbReference type="EMBL" id="CP000744">
    <property type="protein sequence ID" value="ABR82442.1"/>
    <property type="molecule type" value="Genomic_DNA"/>
</dbReference>
<dbReference type="RefSeq" id="WP_003155134.1">
    <property type="nucleotide sequence ID" value="NC_009656.1"/>
</dbReference>
<dbReference type="SMR" id="A6VDI9"/>
<dbReference type="GeneID" id="77223603"/>
<dbReference type="KEGG" id="pap:PSPA7_5805"/>
<dbReference type="HOGENOM" id="CLU_048577_5_0_6"/>
<dbReference type="UniPathway" id="UPA00031">
    <property type="reaction ID" value="UER00008"/>
</dbReference>
<dbReference type="Proteomes" id="UP000001582">
    <property type="component" value="Chromosome"/>
</dbReference>
<dbReference type="GO" id="GO:0005737">
    <property type="term" value="C:cytoplasm"/>
    <property type="evidence" value="ECO:0007669"/>
    <property type="project" value="UniProtKB-SubCell"/>
</dbReference>
<dbReference type="GO" id="GO:0000287">
    <property type="term" value="F:magnesium ion binding"/>
    <property type="evidence" value="ECO:0007669"/>
    <property type="project" value="UniProtKB-UniRule"/>
</dbReference>
<dbReference type="GO" id="GO:0004635">
    <property type="term" value="F:phosphoribosyl-AMP cyclohydrolase activity"/>
    <property type="evidence" value="ECO:0007669"/>
    <property type="project" value="UniProtKB-UniRule"/>
</dbReference>
<dbReference type="GO" id="GO:0008270">
    <property type="term" value="F:zinc ion binding"/>
    <property type="evidence" value="ECO:0007669"/>
    <property type="project" value="UniProtKB-UniRule"/>
</dbReference>
<dbReference type="GO" id="GO:0000105">
    <property type="term" value="P:L-histidine biosynthetic process"/>
    <property type="evidence" value="ECO:0007669"/>
    <property type="project" value="UniProtKB-UniRule"/>
</dbReference>
<dbReference type="FunFam" id="3.10.20.810:FF:000001">
    <property type="entry name" value="Histidine biosynthesis bifunctional protein HisIE"/>
    <property type="match status" value="1"/>
</dbReference>
<dbReference type="Gene3D" id="3.10.20.810">
    <property type="entry name" value="Phosphoribosyl-AMP cyclohydrolase"/>
    <property type="match status" value="1"/>
</dbReference>
<dbReference type="HAMAP" id="MF_01021">
    <property type="entry name" value="HisI"/>
    <property type="match status" value="1"/>
</dbReference>
<dbReference type="InterPro" id="IPR026660">
    <property type="entry name" value="PRA-CH"/>
</dbReference>
<dbReference type="InterPro" id="IPR002496">
    <property type="entry name" value="PRib_AMP_CycHydrolase_dom"/>
</dbReference>
<dbReference type="InterPro" id="IPR038019">
    <property type="entry name" value="PRib_AMP_CycHydrolase_sf"/>
</dbReference>
<dbReference type="NCBIfam" id="NF000768">
    <property type="entry name" value="PRK00051.1"/>
    <property type="match status" value="1"/>
</dbReference>
<dbReference type="PANTHER" id="PTHR42945">
    <property type="entry name" value="HISTIDINE BIOSYNTHESIS BIFUNCTIONAL PROTEIN"/>
    <property type="match status" value="1"/>
</dbReference>
<dbReference type="PANTHER" id="PTHR42945:SF1">
    <property type="entry name" value="HISTIDINE BIOSYNTHESIS BIFUNCTIONAL PROTEIN HIS7"/>
    <property type="match status" value="1"/>
</dbReference>
<dbReference type="Pfam" id="PF01502">
    <property type="entry name" value="PRA-CH"/>
    <property type="match status" value="1"/>
</dbReference>
<dbReference type="SUPFAM" id="SSF141734">
    <property type="entry name" value="HisI-like"/>
    <property type="match status" value="1"/>
</dbReference>
<protein>
    <recommendedName>
        <fullName evidence="1">Phosphoribosyl-AMP cyclohydrolase</fullName>
        <shortName evidence="1">PRA-CH</shortName>
        <ecNumber evidence="1">3.5.4.19</ecNumber>
    </recommendedName>
</protein>
<sequence>MKDWLDEIHWNADGLVPAIAQDHETGRVLMMAWMNREALALTASENRAIYWSRSRGKLWRKGEESGHVQKLHELRLDCDADVVILMVEQVGGIACHTGRESCFYRVYENGDWKVVDPVLKDPDAIYEHAGHQHE</sequence>
<comment type="function">
    <text evidence="1">Catalyzes the hydrolysis of the adenine ring of phosphoribosyl-AMP.</text>
</comment>
<comment type="catalytic activity">
    <reaction evidence="1">
        <text>1-(5-phospho-beta-D-ribosyl)-5'-AMP + H2O = 1-(5-phospho-beta-D-ribosyl)-5-[(5-phospho-beta-D-ribosylamino)methylideneamino]imidazole-4-carboxamide</text>
        <dbReference type="Rhea" id="RHEA:20049"/>
        <dbReference type="ChEBI" id="CHEBI:15377"/>
        <dbReference type="ChEBI" id="CHEBI:58435"/>
        <dbReference type="ChEBI" id="CHEBI:59457"/>
        <dbReference type="EC" id="3.5.4.19"/>
    </reaction>
</comment>
<comment type="cofactor">
    <cofactor evidence="1">
        <name>Mg(2+)</name>
        <dbReference type="ChEBI" id="CHEBI:18420"/>
    </cofactor>
    <text evidence="1">Binds 1 Mg(2+) ion per subunit.</text>
</comment>
<comment type="cofactor">
    <cofactor evidence="1">
        <name>Zn(2+)</name>
        <dbReference type="ChEBI" id="CHEBI:29105"/>
    </cofactor>
    <text evidence="1">Binds 1 zinc ion per subunit.</text>
</comment>
<comment type="pathway">
    <text evidence="1">Amino-acid biosynthesis; L-histidine biosynthesis; L-histidine from 5-phospho-alpha-D-ribose 1-diphosphate: step 3/9.</text>
</comment>
<comment type="subunit">
    <text evidence="1">Homodimer.</text>
</comment>
<comment type="subcellular location">
    <subcellularLocation>
        <location evidence="1">Cytoplasm</location>
    </subcellularLocation>
</comment>
<comment type="similarity">
    <text evidence="1">Belongs to the PRA-CH family.</text>
</comment>
<keyword id="KW-0028">Amino-acid biosynthesis</keyword>
<keyword id="KW-0963">Cytoplasm</keyword>
<keyword id="KW-0368">Histidine biosynthesis</keyword>
<keyword id="KW-0378">Hydrolase</keyword>
<keyword id="KW-0460">Magnesium</keyword>
<keyword id="KW-0479">Metal-binding</keyword>
<keyword id="KW-0862">Zinc</keyword>
<reference key="1">
    <citation type="submission" date="2007-06" db="EMBL/GenBank/DDBJ databases">
        <authorList>
            <person name="Dodson R.J."/>
            <person name="Harkins D."/>
            <person name="Paulsen I.T."/>
        </authorList>
    </citation>
    <scope>NUCLEOTIDE SEQUENCE [LARGE SCALE GENOMIC DNA]</scope>
    <source>
        <strain>DSM 24068 / PA7</strain>
    </source>
</reference>
<accession>A6VDI9</accession>
<name>HIS3_PSEP7</name>
<organism>
    <name type="scientific">Pseudomonas paraeruginosa (strain DSM 24068 / PA7)</name>
    <name type="common">Pseudomonas aeruginosa (strain PA7)</name>
    <dbReference type="NCBI Taxonomy" id="381754"/>
    <lineage>
        <taxon>Bacteria</taxon>
        <taxon>Pseudomonadati</taxon>
        <taxon>Pseudomonadota</taxon>
        <taxon>Gammaproteobacteria</taxon>
        <taxon>Pseudomonadales</taxon>
        <taxon>Pseudomonadaceae</taxon>
        <taxon>Pseudomonas</taxon>
        <taxon>Pseudomonas paraeruginosa</taxon>
    </lineage>
</organism>
<evidence type="ECO:0000255" key="1">
    <source>
        <dbReference type="HAMAP-Rule" id="MF_01021"/>
    </source>
</evidence>
<gene>
    <name evidence="1" type="primary">hisI</name>
    <name type="ordered locus">PSPA7_5805</name>
</gene>